<feature type="chain" id="PRO_0000061357" description="Cytochrome b">
    <location>
        <begin position="1"/>
        <end position="380"/>
    </location>
</feature>
<feature type="transmembrane region" description="Helical" evidence="2">
    <location>
        <begin position="34"/>
        <end position="54"/>
    </location>
</feature>
<feature type="transmembrane region" description="Helical" evidence="2">
    <location>
        <begin position="78"/>
        <end position="99"/>
    </location>
</feature>
<feature type="transmembrane region" description="Helical" evidence="2">
    <location>
        <begin position="114"/>
        <end position="134"/>
    </location>
</feature>
<feature type="transmembrane region" description="Helical" evidence="2">
    <location>
        <begin position="179"/>
        <end position="199"/>
    </location>
</feature>
<feature type="transmembrane region" description="Helical" evidence="2">
    <location>
        <begin position="227"/>
        <end position="247"/>
    </location>
</feature>
<feature type="transmembrane region" description="Helical" evidence="2">
    <location>
        <begin position="289"/>
        <end position="309"/>
    </location>
</feature>
<feature type="transmembrane region" description="Helical" evidence="2">
    <location>
        <begin position="321"/>
        <end position="341"/>
    </location>
</feature>
<feature type="transmembrane region" description="Helical" evidence="2">
    <location>
        <begin position="348"/>
        <end position="368"/>
    </location>
</feature>
<feature type="binding site" description="axial binding residue" evidence="2">
    <location>
        <position position="84"/>
    </location>
    <ligand>
        <name>heme b</name>
        <dbReference type="ChEBI" id="CHEBI:60344"/>
        <label>b562</label>
    </ligand>
    <ligandPart>
        <name>Fe</name>
        <dbReference type="ChEBI" id="CHEBI:18248"/>
    </ligandPart>
</feature>
<feature type="binding site" description="axial binding residue" evidence="2">
    <location>
        <position position="98"/>
    </location>
    <ligand>
        <name>heme b</name>
        <dbReference type="ChEBI" id="CHEBI:60344"/>
        <label>b566</label>
    </ligand>
    <ligandPart>
        <name>Fe</name>
        <dbReference type="ChEBI" id="CHEBI:18248"/>
    </ligandPart>
</feature>
<feature type="binding site" description="axial binding residue" evidence="2">
    <location>
        <position position="183"/>
    </location>
    <ligand>
        <name>heme b</name>
        <dbReference type="ChEBI" id="CHEBI:60344"/>
        <label>b562</label>
    </ligand>
    <ligandPart>
        <name>Fe</name>
        <dbReference type="ChEBI" id="CHEBI:18248"/>
    </ligandPart>
</feature>
<feature type="binding site" description="axial binding residue" evidence="2">
    <location>
        <position position="197"/>
    </location>
    <ligand>
        <name>heme b</name>
        <dbReference type="ChEBI" id="CHEBI:60344"/>
        <label>b566</label>
    </ligand>
    <ligandPart>
        <name>Fe</name>
        <dbReference type="ChEBI" id="CHEBI:18248"/>
    </ligandPart>
</feature>
<feature type="binding site" evidence="2">
    <location>
        <position position="202"/>
    </location>
    <ligand>
        <name>a ubiquinone</name>
        <dbReference type="ChEBI" id="CHEBI:16389"/>
    </ligand>
</feature>
<protein>
    <recommendedName>
        <fullName>Cytochrome b</fullName>
    </recommendedName>
    <alternativeName>
        <fullName>Complex III subunit 3</fullName>
    </alternativeName>
    <alternativeName>
        <fullName>Complex III subunit III</fullName>
    </alternativeName>
    <alternativeName>
        <fullName>Cytochrome b-c1 complex subunit 3</fullName>
    </alternativeName>
    <alternativeName>
        <fullName>Ubiquinol-cytochrome-c reductase complex cytochrome b subunit</fullName>
    </alternativeName>
</protein>
<sequence>MALNLRKNHPLLKIINDSLIDLPTPSNISIWWNFGSLLGICLMTQIITGLLLATHYTADTSLAFNSVAHMCRNVQFGWLIRNLHANGASLFFICIYLHIGRGFYYGSYLNKETWNIGVILLLTLMATAFVGYVLPWGQMSFWGATVITNLFSAIPYIGQTLVEWAWGGFSVDNPTLTRFFALHFLLPFVIAGLTLVHLTFLHETGSNNPLGIPSDCDKIPFHPYYSIKDILGFALMLISLAALALFSPNLLGDPENFTPANPLATPPHIKPEWYFLFAYAILRSIPNKLGGVLALAASVLILFLIPLLHTSKQRSMTFRPLSQILFWILVTNLLILTWVGSQPAEHPFIIIGQLASFLYFMIILVLFPIVGVLENKLLNL</sequence>
<gene>
    <name type="primary">MT-CYB</name>
    <name type="synonym">COB</name>
    <name type="synonym">CYTB</name>
    <name type="synonym">MTCYB</name>
</gene>
<name>CYB_PARRU</name>
<reference key="1">
    <citation type="journal article" date="1996" name="Mol. Phylogenet. Evol.">
        <title>Phylogenetic relationships among the major lineages of the birds-of-paradise (paradisaeidae) using mitochondrial DNA gene sequences.</title>
        <authorList>
            <person name="Nunn G.B."/>
            <person name="Cracraft J."/>
        </authorList>
    </citation>
    <scope>NUCLEOTIDE SEQUENCE [GENOMIC DNA]</scope>
</reference>
<accession>Q35618</accession>
<comment type="function">
    <text evidence="2">Component of the ubiquinol-cytochrome c reductase complex (complex III or cytochrome b-c1 complex) that is part of the mitochondrial respiratory chain. The b-c1 complex mediates electron transfer from ubiquinol to cytochrome c. Contributes to the generation of a proton gradient across the mitochondrial membrane that is then used for ATP synthesis.</text>
</comment>
<comment type="cofactor">
    <cofactor evidence="2">
        <name>heme b</name>
        <dbReference type="ChEBI" id="CHEBI:60344"/>
    </cofactor>
    <text evidence="2">Binds 2 heme b groups non-covalently.</text>
</comment>
<comment type="subunit">
    <text evidence="2">The cytochrome bc1 complex contains 11 subunits: 3 respiratory subunits (MT-CYB, CYC1 and UQCRFS1), 2 core proteins (UQCRC1 and UQCRC2) and 6 low-molecular weight proteins (UQCRH/QCR6, UQCRB/QCR7, UQCRQ/QCR8, UQCR10/QCR9, UQCR11/QCR10 and a cleavage product of UQCRFS1). This cytochrome bc1 complex then forms a dimer.</text>
</comment>
<comment type="subcellular location">
    <subcellularLocation>
        <location evidence="2">Mitochondrion inner membrane</location>
        <topology evidence="2">Multi-pass membrane protein</topology>
    </subcellularLocation>
</comment>
<comment type="miscellaneous">
    <text evidence="1">Heme 1 (or BL or b562) is low-potential and absorbs at about 562 nm, and heme 2 (or BH or b566) is high-potential and absorbs at about 566 nm.</text>
</comment>
<comment type="similarity">
    <text evidence="3 4">Belongs to the cytochrome b family.</text>
</comment>
<comment type="caution">
    <text evidence="2">The full-length protein contains only eight transmembrane helices, not nine as predicted by bioinformatics tools.</text>
</comment>
<geneLocation type="mitochondrion"/>
<proteinExistence type="inferred from homology"/>
<evidence type="ECO:0000250" key="1"/>
<evidence type="ECO:0000250" key="2">
    <source>
        <dbReference type="UniProtKB" id="P00157"/>
    </source>
</evidence>
<evidence type="ECO:0000255" key="3">
    <source>
        <dbReference type="PROSITE-ProRule" id="PRU00967"/>
    </source>
</evidence>
<evidence type="ECO:0000255" key="4">
    <source>
        <dbReference type="PROSITE-ProRule" id="PRU00968"/>
    </source>
</evidence>
<keyword id="KW-0249">Electron transport</keyword>
<keyword id="KW-0349">Heme</keyword>
<keyword id="KW-0408">Iron</keyword>
<keyword id="KW-0472">Membrane</keyword>
<keyword id="KW-0479">Metal-binding</keyword>
<keyword id="KW-0496">Mitochondrion</keyword>
<keyword id="KW-0999">Mitochondrion inner membrane</keyword>
<keyword id="KW-0679">Respiratory chain</keyword>
<keyword id="KW-0812">Transmembrane</keyword>
<keyword id="KW-1133">Transmembrane helix</keyword>
<keyword id="KW-0813">Transport</keyword>
<keyword id="KW-0830">Ubiquinone</keyword>
<dbReference type="EMBL" id="U15203">
    <property type="protein sequence ID" value="AAB38155.1"/>
    <property type="molecule type" value="Genomic_DNA"/>
</dbReference>
<dbReference type="SMR" id="Q35618"/>
<dbReference type="GO" id="GO:0005743">
    <property type="term" value="C:mitochondrial inner membrane"/>
    <property type="evidence" value="ECO:0007669"/>
    <property type="project" value="UniProtKB-SubCell"/>
</dbReference>
<dbReference type="GO" id="GO:0045275">
    <property type="term" value="C:respiratory chain complex III"/>
    <property type="evidence" value="ECO:0007669"/>
    <property type="project" value="InterPro"/>
</dbReference>
<dbReference type="GO" id="GO:0046872">
    <property type="term" value="F:metal ion binding"/>
    <property type="evidence" value="ECO:0007669"/>
    <property type="project" value="UniProtKB-KW"/>
</dbReference>
<dbReference type="GO" id="GO:0008121">
    <property type="term" value="F:ubiquinol-cytochrome-c reductase activity"/>
    <property type="evidence" value="ECO:0007669"/>
    <property type="project" value="InterPro"/>
</dbReference>
<dbReference type="GO" id="GO:0006122">
    <property type="term" value="P:mitochondrial electron transport, ubiquinol to cytochrome c"/>
    <property type="evidence" value="ECO:0007669"/>
    <property type="project" value="TreeGrafter"/>
</dbReference>
<dbReference type="CDD" id="cd00290">
    <property type="entry name" value="cytochrome_b_C"/>
    <property type="match status" value="1"/>
</dbReference>
<dbReference type="CDD" id="cd00284">
    <property type="entry name" value="Cytochrome_b_N"/>
    <property type="match status" value="1"/>
</dbReference>
<dbReference type="FunFam" id="1.20.810.10:FF:000002">
    <property type="entry name" value="Cytochrome b"/>
    <property type="match status" value="1"/>
</dbReference>
<dbReference type="Gene3D" id="1.20.810.10">
    <property type="entry name" value="Cytochrome Bc1 Complex, Chain C"/>
    <property type="match status" value="1"/>
</dbReference>
<dbReference type="InterPro" id="IPR005798">
    <property type="entry name" value="Cyt_b/b6_C"/>
</dbReference>
<dbReference type="InterPro" id="IPR036150">
    <property type="entry name" value="Cyt_b/b6_C_sf"/>
</dbReference>
<dbReference type="InterPro" id="IPR005797">
    <property type="entry name" value="Cyt_b/b6_N"/>
</dbReference>
<dbReference type="InterPro" id="IPR027387">
    <property type="entry name" value="Cytb/b6-like_sf"/>
</dbReference>
<dbReference type="InterPro" id="IPR030689">
    <property type="entry name" value="Cytochrome_b"/>
</dbReference>
<dbReference type="InterPro" id="IPR048260">
    <property type="entry name" value="Cytochrome_b_C_euk/bac"/>
</dbReference>
<dbReference type="InterPro" id="IPR048259">
    <property type="entry name" value="Cytochrome_b_N_euk/bac"/>
</dbReference>
<dbReference type="InterPro" id="IPR016174">
    <property type="entry name" value="Di-haem_cyt_TM"/>
</dbReference>
<dbReference type="PANTHER" id="PTHR19271">
    <property type="entry name" value="CYTOCHROME B"/>
    <property type="match status" value="1"/>
</dbReference>
<dbReference type="PANTHER" id="PTHR19271:SF16">
    <property type="entry name" value="CYTOCHROME B"/>
    <property type="match status" value="1"/>
</dbReference>
<dbReference type="Pfam" id="PF00032">
    <property type="entry name" value="Cytochrom_B_C"/>
    <property type="match status" value="1"/>
</dbReference>
<dbReference type="Pfam" id="PF00033">
    <property type="entry name" value="Cytochrome_B"/>
    <property type="match status" value="1"/>
</dbReference>
<dbReference type="PIRSF" id="PIRSF038885">
    <property type="entry name" value="COB"/>
    <property type="match status" value="1"/>
</dbReference>
<dbReference type="SUPFAM" id="SSF81648">
    <property type="entry name" value="a domain/subunit of cytochrome bc1 complex (Ubiquinol-cytochrome c reductase)"/>
    <property type="match status" value="1"/>
</dbReference>
<dbReference type="SUPFAM" id="SSF81342">
    <property type="entry name" value="Transmembrane di-heme cytochromes"/>
    <property type="match status" value="1"/>
</dbReference>
<dbReference type="PROSITE" id="PS51003">
    <property type="entry name" value="CYTB_CTER"/>
    <property type="match status" value="1"/>
</dbReference>
<dbReference type="PROSITE" id="PS51002">
    <property type="entry name" value="CYTB_NTER"/>
    <property type="match status" value="1"/>
</dbReference>
<organism>
    <name type="scientific">Paradisaea rudolphi</name>
    <name type="common">Blue bird-of-paradise</name>
    <dbReference type="NCBI Taxonomy" id="36267"/>
    <lineage>
        <taxon>Eukaryota</taxon>
        <taxon>Metazoa</taxon>
        <taxon>Chordata</taxon>
        <taxon>Craniata</taxon>
        <taxon>Vertebrata</taxon>
        <taxon>Euteleostomi</taxon>
        <taxon>Archelosauria</taxon>
        <taxon>Archosauria</taxon>
        <taxon>Dinosauria</taxon>
        <taxon>Saurischia</taxon>
        <taxon>Theropoda</taxon>
        <taxon>Coelurosauria</taxon>
        <taxon>Aves</taxon>
        <taxon>Neognathae</taxon>
        <taxon>Neoaves</taxon>
        <taxon>Telluraves</taxon>
        <taxon>Australaves</taxon>
        <taxon>Passeriformes</taxon>
        <taxon>Corvoidea</taxon>
        <taxon>Paradisaeidae</taxon>
        <taxon>Paradisaea</taxon>
    </lineage>
</organism>